<reference key="1">
    <citation type="journal article" date="2004" name="J. Mol. Microbiol. Biotechnol.">
        <title>The complete genome sequence of Bacillus licheniformis DSM13, an organism with great industrial potential.</title>
        <authorList>
            <person name="Veith B."/>
            <person name="Herzberg C."/>
            <person name="Steckel S."/>
            <person name="Feesche J."/>
            <person name="Maurer K.H."/>
            <person name="Ehrenreich P."/>
            <person name="Baeumer S."/>
            <person name="Henne A."/>
            <person name="Liesegang H."/>
            <person name="Merkl R."/>
            <person name="Ehrenreich A."/>
            <person name="Gottschalk G."/>
        </authorList>
    </citation>
    <scope>NUCLEOTIDE SEQUENCE [LARGE SCALE GENOMIC DNA]</scope>
    <source>
        <strain>ATCC 14580 / DSM 13 / JCM 2505 / CCUG 7422 / NBRC 12200 / NCIMB 9375 / NCTC 10341 / NRRL NRS-1264 / Gibson 46</strain>
    </source>
</reference>
<reference key="2">
    <citation type="journal article" date="2004" name="Genome Biol.">
        <title>Complete genome sequence of the industrial bacterium Bacillus licheniformis and comparisons with closely related Bacillus species.</title>
        <authorList>
            <person name="Rey M.W."/>
            <person name="Ramaiya P."/>
            <person name="Nelson B.A."/>
            <person name="Brody-Karpin S.D."/>
            <person name="Zaretsky E.J."/>
            <person name="Tang M."/>
            <person name="Lopez de Leon A."/>
            <person name="Xiang H."/>
            <person name="Gusti V."/>
            <person name="Clausen I.G."/>
            <person name="Olsen P.B."/>
            <person name="Rasmussen M.D."/>
            <person name="Andersen J.T."/>
            <person name="Joergensen P.L."/>
            <person name="Larsen T.S."/>
            <person name="Sorokin A."/>
            <person name="Bolotin A."/>
            <person name="Lapidus A."/>
            <person name="Galleron N."/>
            <person name="Ehrlich S.D."/>
            <person name="Berka R.M."/>
        </authorList>
    </citation>
    <scope>NUCLEOTIDE SEQUENCE [LARGE SCALE GENOMIC DNA]</scope>
    <source>
        <strain>ATCC 14580 / DSM 13 / JCM 2505 / CCUG 7422 / NBRC 12200 / NCIMB 9375 / NCTC 10341 / NRRL NRS-1264 / Gibson 46</strain>
    </source>
</reference>
<evidence type="ECO:0000255" key="1">
    <source>
        <dbReference type="HAMAP-Rule" id="MF_00335"/>
    </source>
</evidence>
<evidence type="ECO:0000255" key="2">
    <source>
        <dbReference type="PROSITE-ProRule" id="PRU01175"/>
    </source>
</evidence>
<protein>
    <recommendedName>
        <fullName evidence="1">Ribonuclease Y</fullName>
        <shortName evidence="1">RNase Y</shortName>
        <ecNumber evidence="1">3.1.-.-</ecNumber>
    </recommendedName>
</protein>
<feature type="chain" id="PRO_0000344819" description="Ribonuclease Y">
    <location>
        <begin position="1"/>
        <end position="519"/>
    </location>
</feature>
<feature type="transmembrane region" description="Helical" evidence="1">
    <location>
        <begin position="3"/>
        <end position="23"/>
    </location>
</feature>
<feature type="domain" description="KH" evidence="1">
    <location>
        <begin position="209"/>
        <end position="272"/>
    </location>
</feature>
<feature type="domain" description="HD" evidence="2">
    <location>
        <begin position="335"/>
        <end position="428"/>
    </location>
</feature>
<proteinExistence type="inferred from homology"/>
<comment type="function">
    <text evidence="1">Endoribonuclease that initiates mRNA decay.</text>
</comment>
<comment type="subcellular location">
    <subcellularLocation>
        <location evidence="1">Cell membrane</location>
        <topology evidence="1">Single-pass membrane protein</topology>
    </subcellularLocation>
</comment>
<comment type="similarity">
    <text evidence="1">Belongs to the RNase Y family.</text>
</comment>
<sequence>MSPLAILISILLSLFCLVVGYYVRKIIAEAKISGARNAAEQILGDAKRDAEALKKEALLEAKDEIHTLRIEAEQEVRERRNELQKQENRLLQKEENLDRKDESLDKREAMLEKKDHSLNERQQHIEEMESKVDEMIRMQQSELERISSLTRDEAKQIILERVENELSHDIAIMMKESENRAKEEADKKAKNILSLALQRCAADHVAETTVSVVNLPNDEMKGRIIGREGRNIRTLETLTGIDLIIDDTPEAVILSGFDPIRRETARIALDKLVQDGRIHPARIEEMVEKSRREVDDYIREMGEQTTFEVGVHGLHPDLIKILGRLKFRTSYGQNVLKHSMEVAFLTGLMASELGEDVTLAKRAGLLHDIGKAIDHEVEGSHVEIGVELATKYKEHPVVINSIASHHGDQEPTSIIAVLVAAADALSAARPGARSETLENYIRRLEKLEEISESYEGVEKSFAIQAGREVRIMVKPDSINDLEAHRLARDIRKRIEDELDYPGHIKVTVIRETRAVEYAK</sequence>
<name>RNY_BACLD</name>
<dbReference type="EC" id="3.1.-.-" evidence="1"/>
<dbReference type="EMBL" id="CP000002">
    <property type="protein sequence ID" value="AAU23453.1"/>
    <property type="molecule type" value="Genomic_DNA"/>
</dbReference>
<dbReference type="EMBL" id="AE017333">
    <property type="protein sequence ID" value="AAU40813.1"/>
    <property type="molecule type" value="Genomic_DNA"/>
</dbReference>
<dbReference type="RefSeq" id="WP_003181928.1">
    <property type="nucleotide sequence ID" value="NC_006322.1"/>
</dbReference>
<dbReference type="STRING" id="279010.BL03655"/>
<dbReference type="GeneID" id="92861489"/>
<dbReference type="KEGG" id="bld:BLi01919"/>
<dbReference type="KEGG" id="bli:BL03655"/>
<dbReference type="eggNOG" id="COG1418">
    <property type="taxonomic scope" value="Bacteria"/>
</dbReference>
<dbReference type="HOGENOM" id="CLU_028328_1_0_9"/>
<dbReference type="Proteomes" id="UP000000606">
    <property type="component" value="Chromosome"/>
</dbReference>
<dbReference type="GO" id="GO:0005886">
    <property type="term" value="C:plasma membrane"/>
    <property type="evidence" value="ECO:0007669"/>
    <property type="project" value="UniProtKB-SubCell"/>
</dbReference>
<dbReference type="GO" id="GO:0003723">
    <property type="term" value="F:RNA binding"/>
    <property type="evidence" value="ECO:0007669"/>
    <property type="project" value="UniProtKB-UniRule"/>
</dbReference>
<dbReference type="GO" id="GO:0004521">
    <property type="term" value="F:RNA endonuclease activity"/>
    <property type="evidence" value="ECO:0007669"/>
    <property type="project" value="UniProtKB-UniRule"/>
</dbReference>
<dbReference type="GO" id="GO:0006402">
    <property type="term" value="P:mRNA catabolic process"/>
    <property type="evidence" value="ECO:0007669"/>
    <property type="project" value="UniProtKB-UniRule"/>
</dbReference>
<dbReference type="CDD" id="cd00077">
    <property type="entry name" value="HDc"/>
    <property type="match status" value="1"/>
</dbReference>
<dbReference type="CDD" id="cd22431">
    <property type="entry name" value="KH-I_RNaseY"/>
    <property type="match status" value="1"/>
</dbReference>
<dbReference type="FunFam" id="1.10.3210.10:FF:000003">
    <property type="entry name" value="Ribonuclease Y"/>
    <property type="match status" value="1"/>
</dbReference>
<dbReference type="FunFam" id="3.30.1370.10:FF:000006">
    <property type="entry name" value="Ribonuclease Y"/>
    <property type="match status" value="1"/>
</dbReference>
<dbReference type="Gene3D" id="1.10.3210.10">
    <property type="entry name" value="Hypothetical protein af1432"/>
    <property type="match status" value="1"/>
</dbReference>
<dbReference type="Gene3D" id="3.30.1370.10">
    <property type="entry name" value="K Homology domain, type 1"/>
    <property type="match status" value="1"/>
</dbReference>
<dbReference type="HAMAP" id="MF_00335">
    <property type="entry name" value="RNase_Y"/>
    <property type="match status" value="1"/>
</dbReference>
<dbReference type="InterPro" id="IPR003607">
    <property type="entry name" value="HD/PDEase_dom"/>
</dbReference>
<dbReference type="InterPro" id="IPR006674">
    <property type="entry name" value="HD_domain"/>
</dbReference>
<dbReference type="InterPro" id="IPR006675">
    <property type="entry name" value="HDIG_dom"/>
</dbReference>
<dbReference type="InterPro" id="IPR004087">
    <property type="entry name" value="KH_dom"/>
</dbReference>
<dbReference type="InterPro" id="IPR004088">
    <property type="entry name" value="KH_dom_type_1"/>
</dbReference>
<dbReference type="InterPro" id="IPR036612">
    <property type="entry name" value="KH_dom_type_1_sf"/>
</dbReference>
<dbReference type="InterPro" id="IPR017705">
    <property type="entry name" value="Ribonuclease_Y"/>
</dbReference>
<dbReference type="InterPro" id="IPR022711">
    <property type="entry name" value="RNase_Y_N"/>
</dbReference>
<dbReference type="NCBIfam" id="TIGR00277">
    <property type="entry name" value="HDIG"/>
    <property type="match status" value="1"/>
</dbReference>
<dbReference type="NCBIfam" id="TIGR03319">
    <property type="entry name" value="RNase_Y"/>
    <property type="match status" value="1"/>
</dbReference>
<dbReference type="PANTHER" id="PTHR12826">
    <property type="entry name" value="RIBONUCLEASE Y"/>
    <property type="match status" value="1"/>
</dbReference>
<dbReference type="PANTHER" id="PTHR12826:SF15">
    <property type="entry name" value="RIBONUCLEASE Y"/>
    <property type="match status" value="1"/>
</dbReference>
<dbReference type="Pfam" id="PF01966">
    <property type="entry name" value="HD"/>
    <property type="match status" value="1"/>
</dbReference>
<dbReference type="Pfam" id="PF00013">
    <property type="entry name" value="KH_1"/>
    <property type="match status" value="1"/>
</dbReference>
<dbReference type="Pfam" id="PF12072">
    <property type="entry name" value="RNase_Y_N"/>
    <property type="match status" value="1"/>
</dbReference>
<dbReference type="SMART" id="SM00471">
    <property type="entry name" value="HDc"/>
    <property type="match status" value="1"/>
</dbReference>
<dbReference type="SMART" id="SM00322">
    <property type="entry name" value="KH"/>
    <property type="match status" value="1"/>
</dbReference>
<dbReference type="SUPFAM" id="SSF54791">
    <property type="entry name" value="Eukaryotic type KH-domain (KH-domain type I)"/>
    <property type="match status" value="1"/>
</dbReference>
<dbReference type="SUPFAM" id="SSF109604">
    <property type="entry name" value="HD-domain/PDEase-like"/>
    <property type="match status" value="1"/>
</dbReference>
<dbReference type="PROSITE" id="PS51831">
    <property type="entry name" value="HD"/>
    <property type="match status" value="1"/>
</dbReference>
<dbReference type="PROSITE" id="PS50084">
    <property type="entry name" value="KH_TYPE_1"/>
    <property type="match status" value="1"/>
</dbReference>
<gene>
    <name evidence="1" type="primary">rny</name>
    <name type="ordered locus">BLi01919</name>
    <name type="ordered locus">BL03655</name>
</gene>
<accession>Q65JF1</accession>
<accession>Q62UV6</accession>
<organism>
    <name type="scientific">Bacillus licheniformis (strain ATCC 14580 / DSM 13 / JCM 2505 / CCUG 7422 / NBRC 12200 / NCIMB 9375 / NCTC 10341 / NRRL NRS-1264 / Gibson 46)</name>
    <dbReference type="NCBI Taxonomy" id="279010"/>
    <lineage>
        <taxon>Bacteria</taxon>
        <taxon>Bacillati</taxon>
        <taxon>Bacillota</taxon>
        <taxon>Bacilli</taxon>
        <taxon>Bacillales</taxon>
        <taxon>Bacillaceae</taxon>
        <taxon>Bacillus</taxon>
    </lineage>
</organism>
<keyword id="KW-1003">Cell membrane</keyword>
<keyword id="KW-0255">Endonuclease</keyword>
<keyword id="KW-0378">Hydrolase</keyword>
<keyword id="KW-0472">Membrane</keyword>
<keyword id="KW-0540">Nuclease</keyword>
<keyword id="KW-1185">Reference proteome</keyword>
<keyword id="KW-0694">RNA-binding</keyword>
<keyword id="KW-0812">Transmembrane</keyword>
<keyword id="KW-1133">Transmembrane helix</keyword>